<protein>
    <recommendedName>
        <fullName evidence="1">Germination protease</fullName>
        <ecNumber evidence="1">3.4.24.78</ecNumber>
    </recommendedName>
    <alternativeName>
        <fullName evidence="1">GPR endopeptidase</fullName>
    </alternativeName>
    <alternativeName>
        <fullName evidence="1">Germination proteinase</fullName>
    </alternativeName>
    <alternativeName>
        <fullName evidence="1">Spore protease</fullName>
    </alternativeName>
</protein>
<dbReference type="EC" id="3.4.24.78" evidence="1"/>
<dbReference type="EMBL" id="CP001215">
    <property type="protein sequence ID" value="ACP13083.1"/>
    <property type="molecule type" value="Genomic_DNA"/>
</dbReference>
<dbReference type="RefSeq" id="WP_000662639.1">
    <property type="nucleotide sequence ID" value="NC_012581.1"/>
</dbReference>
<dbReference type="SMR" id="C3L5S4"/>
<dbReference type="MEROPS" id="A25.001"/>
<dbReference type="GeneID" id="45024198"/>
<dbReference type="KEGG" id="bah:BAMEG_4583"/>
<dbReference type="HOGENOM" id="CLU_055087_1_0_9"/>
<dbReference type="GO" id="GO:0004222">
    <property type="term" value="F:metalloendopeptidase activity"/>
    <property type="evidence" value="ECO:0007669"/>
    <property type="project" value="UniProtKB-UniRule"/>
</dbReference>
<dbReference type="GO" id="GO:0006508">
    <property type="term" value="P:proteolysis"/>
    <property type="evidence" value="ECO:0007669"/>
    <property type="project" value="UniProtKB-UniRule"/>
</dbReference>
<dbReference type="GO" id="GO:0009847">
    <property type="term" value="P:spore germination"/>
    <property type="evidence" value="ECO:0007669"/>
    <property type="project" value="UniProtKB-UniRule"/>
</dbReference>
<dbReference type="FunFam" id="3.40.50.1450:FF:000004">
    <property type="entry name" value="Germination protease"/>
    <property type="match status" value="1"/>
</dbReference>
<dbReference type="Gene3D" id="3.40.50.1450">
    <property type="entry name" value="HybD-like"/>
    <property type="match status" value="1"/>
</dbReference>
<dbReference type="HAMAP" id="MF_00626">
    <property type="entry name" value="Germination_prot"/>
    <property type="match status" value="1"/>
</dbReference>
<dbReference type="InterPro" id="IPR023430">
    <property type="entry name" value="Pept_HybD-like_dom_sf"/>
</dbReference>
<dbReference type="InterPro" id="IPR005080">
    <property type="entry name" value="Peptidase_A25"/>
</dbReference>
<dbReference type="NCBIfam" id="TIGR01441">
    <property type="entry name" value="GPR"/>
    <property type="match status" value="1"/>
</dbReference>
<dbReference type="Pfam" id="PF03418">
    <property type="entry name" value="Peptidase_A25"/>
    <property type="match status" value="1"/>
</dbReference>
<dbReference type="PIRSF" id="PIRSF019549">
    <property type="entry name" value="Peptidase_A25"/>
    <property type="match status" value="1"/>
</dbReference>
<dbReference type="SUPFAM" id="SSF53163">
    <property type="entry name" value="HybD-like"/>
    <property type="match status" value="1"/>
</dbReference>
<comment type="function">
    <text evidence="1">Initiates the rapid degradation of small, acid-soluble proteins during spore germination.</text>
</comment>
<comment type="catalytic activity">
    <reaction evidence="1">
        <text>Endopeptidase action with P4 Glu or Asp, P1 preferably Glu &gt; Asp, P1' hydrophobic and P2' Ala.</text>
        <dbReference type="EC" id="3.4.24.78"/>
    </reaction>
</comment>
<comment type="subunit">
    <text evidence="1">Homotetramer.</text>
</comment>
<comment type="PTM">
    <text evidence="1">Autoproteolytically processed. The inactive tetrameric zymogen termed p46 autoprocesses to a smaller form termed p41, which is active only during spore germination.</text>
</comment>
<comment type="similarity">
    <text evidence="1">Belongs to the peptidase A25 family.</text>
</comment>
<evidence type="ECO:0000255" key="1">
    <source>
        <dbReference type="HAMAP-Rule" id="MF_00626"/>
    </source>
</evidence>
<name>GPR_BACAC</name>
<accession>C3L5S4</accession>
<organism>
    <name type="scientific">Bacillus anthracis (strain CDC 684 / NRRL 3495)</name>
    <dbReference type="NCBI Taxonomy" id="568206"/>
    <lineage>
        <taxon>Bacteria</taxon>
        <taxon>Bacillati</taxon>
        <taxon>Bacillota</taxon>
        <taxon>Bacilli</taxon>
        <taxon>Bacillales</taxon>
        <taxon>Bacillaceae</taxon>
        <taxon>Bacillus</taxon>
        <taxon>Bacillus cereus group</taxon>
    </lineage>
</organism>
<sequence length="368" mass="40605">MKEPLDLSKYSVRTDLAVEAHQMLQERQEEQQQGIQGVIVKEREEEGIIITKVTIDEVASESMGKKPGNYLTLEVQGIRQQDTELQQKVERIFAKEFSYFLEEVGVTKEASCLIVGLGNWNVTPDALGPIVVENVLVTRHLFQLQPESVEEGFRPVSAIRPGVMGITGIETSDVIYGIIEKTKPDFVIAIDALAARSIERVNSTIQISDTGIHPGSGVGNKRKELSKETLGIPVIAIGVPTVVDAVSITSDTIDFILKHFGREMKEGNKPSRSLLPAGFTFGEKKKLTEEDMPDEKSRNMFLGAVGTLEDEEKRKLIYEVLSPLGHNLMVTPKEVDAFIEDMANVIASGLNAALHHQIDQDNTGAYTH</sequence>
<feature type="propeptide" id="PRO_1000147251" evidence="1">
    <location>
        <begin position="1"/>
        <end position="15"/>
    </location>
</feature>
<feature type="chain" id="PRO_1000147252" description="Germination protease">
    <location>
        <begin position="16"/>
        <end position="368"/>
    </location>
</feature>
<reference key="1">
    <citation type="submission" date="2008-10" db="EMBL/GenBank/DDBJ databases">
        <title>Genome sequence of Bacillus anthracis str. CDC 684.</title>
        <authorList>
            <person name="Dodson R.J."/>
            <person name="Munk A.C."/>
            <person name="Brettin T."/>
            <person name="Bruce D."/>
            <person name="Detter C."/>
            <person name="Tapia R."/>
            <person name="Han C."/>
            <person name="Sutton G."/>
            <person name="Sims D."/>
        </authorList>
    </citation>
    <scope>NUCLEOTIDE SEQUENCE [LARGE SCALE GENOMIC DNA]</scope>
    <source>
        <strain>CDC 684 / NRRL 3495</strain>
    </source>
</reference>
<proteinExistence type="inferred from homology"/>
<gene>
    <name evidence="1" type="primary">gpr</name>
    <name type="ordered locus">BAMEG_4583</name>
</gene>
<keyword id="KW-0378">Hydrolase</keyword>
<keyword id="KW-0645">Protease</keyword>
<keyword id="KW-0865">Zymogen</keyword>